<name>Y1285_SULAC</name>
<dbReference type="EMBL" id="CP000077">
    <property type="protein sequence ID" value="AAY80627.1"/>
    <property type="molecule type" value="Genomic_DNA"/>
</dbReference>
<dbReference type="RefSeq" id="WP_011278129.1">
    <property type="nucleotide sequence ID" value="NC_007181.1"/>
</dbReference>
<dbReference type="SMR" id="Q4J9A3"/>
<dbReference type="STRING" id="330779.Saci_1285"/>
<dbReference type="GeneID" id="14551790"/>
<dbReference type="KEGG" id="sai:Saci_1285"/>
<dbReference type="PATRIC" id="fig|330779.12.peg.1243"/>
<dbReference type="eggNOG" id="arCOG01043">
    <property type="taxonomic scope" value="Archaea"/>
</dbReference>
<dbReference type="HOGENOM" id="CLU_134829_1_0_2"/>
<dbReference type="Proteomes" id="UP000001018">
    <property type="component" value="Chromosome"/>
</dbReference>
<dbReference type="Gene3D" id="3.30.1440.10">
    <property type="match status" value="1"/>
</dbReference>
<dbReference type="HAMAP" id="MF_01112">
    <property type="entry name" value="UPF0201"/>
    <property type="match status" value="1"/>
</dbReference>
<dbReference type="InterPro" id="IPR002739">
    <property type="entry name" value="PAB1135-like"/>
</dbReference>
<dbReference type="InterPro" id="IPR022803">
    <property type="entry name" value="Ribosomal_uL5_dom_sf"/>
</dbReference>
<dbReference type="NCBIfam" id="NF001687">
    <property type="entry name" value="PRK00447.1"/>
    <property type="match status" value="1"/>
</dbReference>
<dbReference type="PANTHER" id="PTHR39652">
    <property type="entry name" value="UPF0201 PROTEIN TK1335"/>
    <property type="match status" value="1"/>
</dbReference>
<dbReference type="PANTHER" id="PTHR39652:SF1">
    <property type="entry name" value="UPF0201 PROTEIN TK1335"/>
    <property type="match status" value="1"/>
</dbReference>
<dbReference type="Pfam" id="PF01877">
    <property type="entry name" value="RNA_binding"/>
    <property type="match status" value="1"/>
</dbReference>
<dbReference type="SUPFAM" id="SSF55282">
    <property type="entry name" value="RL5-like"/>
    <property type="match status" value="1"/>
</dbReference>
<protein>
    <recommendedName>
        <fullName evidence="1">UPF0201 protein Saci_1285</fullName>
    </recommendedName>
</protein>
<comment type="similarity">
    <text evidence="1">Belongs to the UPF0201 family.</text>
</comment>
<sequence length="145" mass="16578">MTRVIVEAVVKPSEDKDKVINAIRNFFDFDKIREEEHGMEKLLIAESNSLTSLLKLHRLLREQRILDAARKYLMKSIVGSRITFMLNKQVAAIGKLSFIDKEHESPLGPIKVTIDYKDPVIVVDWLTPKTAKGVPLWENAIPPEE</sequence>
<evidence type="ECO:0000255" key="1">
    <source>
        <dbReference type="HAMAP-Rule" id="MF_01112"/>
    </source>
</evidence>
<proteinExistence type="inferred from homology"/>
<organism>
    <name type="scientific">Sulfolobus acidocaldarius (strain ATCC 33909 / DSM 639 / JCM 8929 / NBRC 15157 / NCIMB 11770)</name>
    <dbReference type="NCBI Taxonomy" id="330779"/>
    <lineage>
        <taxon>Archaea</taxon>
        <taxon>Thermoproteota</taxon>
        <taxon>Thermoprotei</taxon>
        <taxon>Sulfolobales</taxon>
        <taxon>Sulfolobaceae</taxon>
        <taxon>Sulfolobus</taxon>
    </lineage>
</organism>
<reference key="1">
    <citation type="journal article" date="2005" name="J. Bacteriol.">
        <title>The genome of Sulfolobus acidocaldarius, a model organism of the Crenarchaeota.</title>
        <authorList>
            <person name="Chen L."/>
            <person name="Bruegger K."/>
            <person name="Skovgaard M."/>
            <person name="Redder P."/>
            <person name="She Q."/>
            <person name="Torarinsson E."/>
            <person name="Greve B."/>
            <person name="Awayez M."/>
            <person name="Zibat A."/>
            <person name="Klenk H.-P."/>
            <person name="Garrett R.A."/>
        </authorList>
    </citation>
    <scope>NUCLEOTIDE SEQUENCE [LARGE SCALE GENOMIC DNA]</scope>
    <source>
        <strain>ATCC 33909 / DSM 639 / JCM 8929 / NBRC 15157 / NCIMB 11770</strain>
    </source>
</reference>
<feature type="chain" id="PRO_0000094518" description="UPF0201 protein Saci_1285">
    <location>
        <begin position="1"/>
        <end position="145"/>
    </location>
</feature>
<keyword id="KW-1185">Reference proteome</keyword>
<accession>Q4J9A3</accession>
<gene>
    <name type="ordered locus">Saci_1285</name>
</gene>